<proteinExistence type="inferred from homology"/>
<gene>
    <name evidence="1" type="primary">hslV</name>
    <name type="ordered locus">LSEI_1404</name>
</gene>
<organism>
    <name type="scientific">Lacticaseibacillus paracasei (strain ATCC 334 / BCRC 17002 / CCUG 31169 / CIP 107868 / KCTC 3260 / NRRL B-441)</name>
    <name type="common">Lactobacillus paracasei</name>
    <dbReference type="NCBI Taxonomy" id="321967"/>
    <lineage>
        <taxon>Bacteria</taxon>
        <taxon>Bacillati</taxon>
        <taxon>Bacillota</taxon>
        <taxon>Bacilli</taxon>
        <taxon>Lactobacillales</taxon>
        <taxon>Lactobacillaceae</taxon>
        <taxon>Lacticaseibacillus</taxon>
    </lineage>
</organism>
<accession>Q039E0</accession>
<evidence type="ECO:0000255" key="1">
    <source>
        <dbReference type="HAMAP-Rule" id="MF_00248"/>
    </source>
</evidence>
<protein>
    <recommendedName>
        <fullName evidence="1">ATP-dependent protease subunit HslV</fullName>
        <ecNumber evidence="1">3.4.25.2</ecNumber>
    </recommendedName>
</protein>
<keyword id="KW-0021">Allosteric enzyme</keyword>
<keyword id="KW-0963">Cytoplasm</keyword>
<keyword id="KW-0378">Hydrolase</keyword>
<keyword id="KW-0479">Metal-binding</keyword>
<keyword id="KW-0645">Protease</keyword>
<keyword id="KW-1185">Reference proteome</keyword>
<keyword id="KW-0915">Sodium</keyword>
<keyword id="KW-0888">Threonine protease</keyword>
<sequence>MTTIAAVRKDGVTALAGDGQVTLGEKVIMKGNAQKVRRIYHDQVVIGFAGGVADAFTLQDWFEKKLEHYAGNLRRSAVALAQDWRKDPTLQKLEAMMIVMDEHDLLLVSGSGEVIDPDEDVVAIGSGGNFAQAAAIAMLRHAPDMTPADIAKEAVNIAGNIDIFTNHNVIVESF</sequence>
<feature type="chain" id="PRO_1000012625" description="ATP-dependent protease subunit HslV">
    <location>
        <begin position="1"/>
        <end position="174"/>
    </location>
</feature>
<feature type="active site" evidence="1">
    <location>
        <position position="2"/>
    </location>
</feature>
<feature type="binding site" evidence="1">
    <location>
        <position position="159"/>
    </location>
    <ligand>
        <name>Na(+)</name>
        <dbReference type="ChEBI" id="CHEBI:29101"/>
    </ligand>
</feature>
<feature type="binding site" evidence="1">
    <location>
        <position position="162"/>
    </location>
    <ligand>
        <name>Na(+)</name>
        <dbReference type="ChEBI" id="CHEBI:29101"/>
    </ligand>
</feature>
<feature type="binding site" evidence="1">
    <location>
        <position position="165"/>
    </location>
    <ligand>
        <name>Na(+)</name>
        <dbReference type="ChEBI" id="CHEBI:29101"/>
    </ligand>
</feature>
<comment type="function">
    <text evidence="1">Protease subunit of a proteasome-like degradation complex believed to be a general protein degrading machinery.</text>
</comment>
<comment type="catalytic activity">
    <reaction evidence="1">
        <text>ATP-dependent cleavage of peptide bonds with broad specificity.</text>
        <dbReference type="EC" id="3.4.25.2"/>
    </reaction>
</comment>
<comment type="activity regulation">
    <text evidence="1">Allosterically activated by HslU binding.</text>
</comment>
<comment type="subunit">
    <text evidence="1">A double ring-shaped homohexamer of HslV is capped on each side by a ring-shaped HslU homohexamer. The assembly of the HslU/HslV complex is dependent on binding of ATP.</text>
</comment>
<comment type="subcellular location">
    <subcellularLocation>
        <location evidence="1">Cytoplasm</location>
    </subcellularLocation>
</comment>
<comment type="similarity">
    <text evidence="1">Belongs to the peptidase T1B family. HslV subfamily.</text>
</comment>
<reference key="1">
    <citation type="journal article" date="2006" name="Proc. Natl. Acad. Sci. U.S.A.">
        <title>Comparative genomics of the lactic acid bacteria.</title>
        <authorList>
            <person name="Makarova K.S."/>
            <person name="Slesarev A."/>
            <person name="Wolf Y.I."/>
            <person name="Sorokin A."/>
            <person name="Mirkin B."/>
            <person name="Koonin E.V."/>
            <person name="Pavlov A."/>
            <person name="Pavlova N."/>
            <person name="Karamychev V."/>
            <person name="Polouchine N."/>
            <person name="Shakhova V."/>
            <person name="Grigoriev I."/>
            <person name="Lou Y."/>
            <person name="Rohksar D."/>
            <person name="Lucas S."/>
            <person name="Huang K."/>
            <person name="Goodstein D.M."/>
            <person name="Hawkins T."/>
            <person name="Plengvidhya V."/>
            <person name="Welker D."/>
            <person name="Hughes J."/>
            <person name="Goh Y."/>
            <person name="Benson A."/>
            <person name="Baldwin K."/>
            <person name="Lee J.-H."/>
            <person name="Diaz-Muniz I."/>
            <person name="Dosti B."/>
            <person name="Smeianov V."/>
            <person name="Wechter W."/>
            <person name="Barabote R."/>
            <person name="Lorca G."/>
            <person name="Altermann E."/>
            <person name="Barrangou R."/>
            <person name="Ganesan B."/>
            <person name="Xie Y."/>
            <person name="Rawsthorne H."/>
            <person name="Tamir D."/>
            <person name="Parker C."/>
            <person name="Breidt F."/>
            <person name="Broadbent J.R."/>
            <person name="Hutkins R."/>
            <person name="O'Sullivan D."/>
            <person name="Steele J."/>
            <person name="Unlu G."/>
            <person name="Saier M.H. Jr."/>
            <person name="Klaenhammer T."/>
            <person name="Richardson P."/>
            <person name="Kozyavkin S."/>
            <person name="Weimer B.C."/>
            <person name="Mills D.A."/>
        </authorList>
    </citation>
    <scope>NUCLEOTIDE SEQUENCE [LARGE SCALE GENOMIC DNA]</scope>
    <source>
        <strain>ATCC 334 / BCRC 17002 / CCUG 31169 / CIP 107868 / KCTC 3260 / NRRL B-441</strain>
    </source>
</reference>
<name>HSLV_LACP3</name>
<dbReference type="EC" id="3.4.25.2" evidence="1"/>
<dbReference type="EMBL" id="CP000423">
    <property type="protein sequence ID" value="ABJ70182.1"/>
    <property type="molecule type" value="Genomic_DNA"/>
</dbReference>
<dbReference type="RefSeq" id="WP_003565422.1">
    <property type="nucleotide sequence ID" value="NC_008526.1"/>
</dbReference>
<dbReference type="RefSeq" id="YP_806624.1">
    <property type="nucleotide sequence ID" value="NC_008526.1"/>
</dbReference>
<dbReference type="SMR" id="Q039E0"/>
<dbReference type="STRING" id="321967.LSEI_1404"/>
<dbReference type="PaxDb" id="321967-LSEI_1404"/>
<dbReference type="GeneID" id="57090071"/>
<dbReference type="KEGG" id="lca:LSEI_1404"/>
<dbReference type="PATRIC" id="fig|321967.11.peg.1382"/>
<dbReference type="HOGENOM" id="CLU_093872_1_1_9"/>
<dbReference type="Proteomes" id="UP000001651">
    <property type="component" value="Chromosome"/>
</dbReference>
<dbReference type="GO" id="GO:0009376">
    <property type="term" value="C:HslUV protease complex"/>
    <property type="evidence" value="ECO:0007669"/>
    <property type="project" value="UniProtKB-UniRule"/>
</dbReference>
<dbReference type="GO" id="GO:0005839">
    <property type="term" value="C:proteasome core complex"/>
    <property type="evidence" value="ECO:0007669"/>
    <property type="project" value="InterPro"/>
</dbReference>
<dbReference type="GO" id="GO:0046872">
    <property type="term" value="F:metal ion binding"/>
    <property type="evidence" value="ECO:0007669"/>
    <property type="project" value="UniProtKB-KW"/>
</dbReference>
<dbReference type="GO" id="GO:0004298">
    <property type="term" value="F:threonine-type endopeptidase activity"/>
    <property type="evidence" value="ECO:0007669"/>
    <property type="project" value="UniProtKB-KW"/>
</dbReference>
<dbReference type="GO" id="GO:0051603">
    <property type="term" value="P:proteolysis involved in protein catabolic process"/>
    <property type="evidence" value="ECO:0007669"/>
    <property type="project" value="InterPro"/>
</dbReference>
<dbReference type="CDD" id="cd01913">
    <property type="entry name" value="protease_HslV"/>
    <property type="match status" value="1"/>
</dbReference>
<dbReference type="Gene3D" id="3.60.20.10">
    <property type="entry name" value="Glutamine Phosphoribosylpyrophosphate, subunit 1, domain 1"/>
    <property type="match status" value="1"/>
</dbReference>
<dbReference type="HAMAP" id="MF_00248">
    <property type="entry name" value="HslV"/>
    <property type="match status" value="1"/>
</dbReference>
<dbReference type="InterPro" id="IPR022281">
    <property type="entry name" value="ATP-dep_Prtase_HsIV_su"/>
</dbReference>
<dbReference type="InterPro" id="IPR029055">
    <property type="entry name" value="Ntn_hydrolases_N"/>
</dbReference>
<dbReference type="InterPro" id="IPR001353">
    <property type="entry name" value="Proteasome_sua/b"/>
</dbReference>
<dbReference type="InterPro" id="IPR023333">
    <property type="entry name" value="Proteasome_suB-type"/>
</dbReference>
<dbReference type="NCBIfam" id="TIGR03692">
    <property type="entry name" value="ATP_dep_HslV"/>
    <property type="match status" value="1"/>
</dbReference>
<dbReference type="NCBIfam" id="NF003964">
    <property type="entry name" value="PRK05456.1"/>
    <property type="match status" value="1"/>
</dbReference>
<dbReference type="PANTHER" id="PTHR32194:SF0">
    <property type="entry name" value="ATP-DEPENDENT PROTEASE SUBUNIT HSLV"/>
    <property type="match status" value="1"/>
</dbReference>
<dbReference type="PANTHER" id="PTHR32194">
    <property type="entry name" value="METALLOPROTEASE TLDD"/>
    <property type="match status" value="1"/>
</dbReference>
<dbReference type="Pfam" id="PF00227">
    <property type="entry name" value="Proteasome"/>
    <property type="match status" value="1"/>
</dbReference>
<dbReference type="SUPFAM" id="SSF56235">
    <property type="entry name" value="N-terminal nucleophile aminohydrolases (Ntn hydrolases)"/>
    <property type="match status" value="1"/>
</dbReference>
<dbReference type="PROSITE" id="PS51476">
    <property type="entry name" value="PROTEASOME_BETA_2"/>
    <property type="match status" value="1"/>
</dbReference>